<organism>
    <name type="scientific">Escherichia coli (strain ATCC 8739 / DSM 1576 / NBRC 3972 / NCIMB 8545 / WDCM 00012 / Crooks)</name>
    <dbReference type="NCBI Taxonomy" id="481805"/>
    <lineage>
        <taxon>Bacteria</taxon>
        <taxon>Pseudomonadati</taxon>
        <taxon>Pseudomonadota</taxon>
        <taxon>Gammaproteobacteria</taxon>
        <taxon>Enterobacterales</taxon>
        <taxon>Enterobacteriaceae</taxon>
        <taxon>Escherichia</taxon>
    </lineage>
</organism>
<comment type="similarity">
    <text evidence="1">Belongs to the SlyX family.</text>
</comment>
<protein>
    <recommendedName>
        <fullName evidence="1">Protein SlyX</fullName>
    </recommendedName>
</protein>
<proteinExistence type="inferred from homology"/>
<evidence type="ECO:0000255" key="1">
    <source>
        <dbReference type="HAMAP-Rule" id="MF_00715"/>
    </source>
</evidence>
<evidence type="ECO:0000256" key="2">
    <source>
        <dbReference type="SAM" id="MobiDB-lite"/>
    </source>
</evidence>
<accession>B1IPB7</accession>
<reference key="1">
    <citation type="submission" date="2008-02" db="EMBL/GenBank/DDBJ databases">
        <title>Complete sequence of Escherichia coli C str. ATCC 8739.</title>
        <authorList>
            <person name="Copeland A."/>
            <person name="Lucas S."/>
            <person name="Lapidus A."/>
            <person name="Glavina del Rio T."/>
            <person name="Dalin E."/>
            <person name="Tice H."/>
            <person name="Bruce D."/>
            <person name="Goodwin L."/>
            <person name="Pitluck S."/>
            <person name="Kiss H."/>
            <person name="Brettin T."/>
            <person name="Detter J.C."/>
            <person name="Han C."/>
            <person name="Kuske C.R."/>
            <person name="Schmutz J."/>
            <person name="Larimer F."/>
            <person name="Land M."/>
            <person name="Hauser L."/>
            <person name="Kyrpides N."/>
            <person name="Mikhailova N."/>
            <person name="Ingram L."/>
            <person name="Richardson P."/>
        </authorList>
    </citation>
    <scope>NUCLEOTIDE SEQUENCE [LARGE SCALE GENOMIC DNA]</scope>
    <source>
        <strain>ATCC 8739 / DSM 1576 / NBRC 3972 / NCIMB 8545 / WDCM 00012 / Crooks</strain>
    </source>
</reference>
<gene>
    <name evidence="1" type="primary">slyX</name>
    <name type="ordered locus">EcolC_0365</name>
</gene>
<sequence length="72" mass="8214">MQDLSLEARLAELESRLAFQEITIEELNVTVTAHEMEMAKLRDHLRLLTEKLKASQPSNIASQAEETPPPHY</sequence>
<dbReference type="EMBL" id="CP000946">
    <property type="protein sequence ID" value="ACA76043.1"/>
    <property type="molecule type" value="Genomic_DNA"/>
</dbReference>
<dbReference type="RefSeq" id="WP_001153615.1">
    <property type="nucleotide sequence ID" value="NZ_MTFT01000001.1"/>
</dbReference>
<dbReference type="SMR" id="B1IPB7"/>
<dbReference type="KEGG" id="ecl:EcolC_0365"/>
<dbReference type="HOGENOM" id="CLU_180796_4_2_6"/>
<dbReference type="Gene3D" id="1.20.5.300">
    <property type="match status" value="1"/>
</dbReference>
<dbReference type="HAMAP" id="MF_00715">
    <property type="entry name" value="SlyX"/>
    <property type="match status" value="1"/>
</dbReference>
<dbReference type="InterPro" id="IPR007236">
    <property type="entry name" value="SlyX"/>
</dbReference>
<dbReference type="NCBIfam" id="NF002750">
    <property type="entry name" value="PRK02793.1"/>
    <property type="match status" value="1"/>
</dbReference>
<dbReference type="PANTHER" id="PTHR36508">
    <property type="entry name" value="PROTEIN SLYX"/>
    <property type="match status" value="1"/>
</dbReference>
<dbReference type="PANTHER" id="PTHR36508:SF1">
    <property type="entry name" value="PROTEIN SLYX"/>
    <property type="match status" value="1"/>
</dbReference>
<dbReference type="Pfam" id="PF04102">
    <property type="entry name" value="SlyX"/>
    <property type="match status" value="1"/>
</dbReference>
<feature type="chain" id="PRO_1000083238" description="Protein SlyX">
    <location>
        <begin position="1"/>
        <end position="72"/>
    </location>
</feature>
<feature type="region of interest" description="Disordered" evidence="2">
    <location>
        <begin position="52"/>
        <end position="72"/>
    </location>
</feature>
<feature type="compositionally biased region" description="Polar residues" evidence="2">
    <location>
        <begin position="55"/>
        <end position="65"/>
    </location>
</feature>
<name>SLYX_ECOLC</name>